<accession>B1LDQ8</accession>
<sequence>MEQTWRWYGPNDPVSLADVRQAGATGVVTALHHIPNGEVWSVEEILKRKAIVEDAGLVWSVVESVPIHEDIKTHTGNYEQWIANYQQTLRNLAQCGIRTVCYNFMPVLDWTRTDLEYVLPDGSKALRFDQIEFAAFEMHILKRPGAEADYTEEEIAQAAERFATMSDEDKARLTRNIIAGLPGAEEGYTLDQFRKHLELYKDIDKAKLRENFAVFLKAIIPVAEEVGVRMAVHPDDPPRPILGLPRIVSTIEDMQWMVDTVNSMANGFTMCTGSYGVRADNDLVDMIKQFGPRIYFTHLRSTMREDNPKTFHEAAHLNGDVDMYEVVKAIVEEEHRRKAEGKEDLIPMRPDHGHQMLDDLKKKTNPGYSAIGRLKGLAEVRGVELAIQRAFFSR</sequence>
<dbReference type="EC" id="4.2.1.8" evidence="1"/>
<dbReference type="EMBL" id="CP000970">
    <property type="protein sequence ID" value="ACB19205.1"/>
    <property type="molecule type" value="Genomic_DNA"/>
</dbReference>
<dbReference type="RefSeq" id="WP_000438582.1">
    <property type="nucleotide sequence ID" value="NC_010498.1"/>
</dbReference>
<dbReference type="SMR" id="B1LDQ8"/>
<dbReference type="GeneID" id="93777517"/>
<dbReference type="KEGG" id="ecm:EcSMS35_4849"/>
<dbReference type="HOGENOM" id="CLU_058621_2_0_6"/>
<dbReference type="UniPathway" id="UPA00246"/>
<dbReference type="Proteomes" id="UP000007011">
    <property type="component" value="Chromosome"/>
</dbReference>
<dbReference type="GO" id="GO:0008198">
    <property type="term" value="F:ferrous iron binding"/>
    <property type="evidence" value="ECO:0007669"/>
    <property type="project" value="TreeGrafter"/>
</dbReference>
<dbReference type="GO" id="GO:0030145">
    <property type="term" value="F:manganese ion binding"/>
    <property type="evidence" value="ECO:0007669"/>
    <property type="project" value="TreeGrafter"/>
</dbReference>
<dbReference type="GO" id="GO:0008927">
    <property type="term" value="F:mannonate dehydratase activity"/>
    <property type="evidence" value="ECO:0007669"/>
    <property type="project" value="UniProtKB-UniRule"/>
</dbReference>
<dbReference type="GO" id="GO:0042840">
    <property type="term" value="P:D-glucuronate catabolic process"/>
    <property type="evidence" value="ECO:0007669"/>
    <property type="project" value="TreeGrafter"/>
</dbReference>
<dbReference type="FunFam" id="3.20.20.150:FF:000004">
    <property type="entry name" value="Mannonate dehydratase"/>
    <property type="match status" value="1"/>
</dbReference>
<dbReference type="FunFam" id="3.20.20.150:FF:000005">
    <property type="entry name" value="Mannonate dehydratase"/>
    <property type="match status" value="1"/>
</dbReference>
<dbReference type="Gene3D" id="3.20.20.150">
    <property type="entry name" value="Divalent-metal-dependent TIM barrel enzymes"/>
    <property type="match status" value="2"/>
</dbReference>
<dbReference type="HAMAP" id="MF_00106">
    <property type="entry name" value="UxuA"/>
    <property type="match status" value="1"/>
</dbReference>
<dbReference type="InterPro" id="IPR004628">
    <property type="entry name" value="Man_deHydtase"/>
</dbReference>
<dbReference type="InterPro" id="IPR036237">
    <property type="entry name" value="Xyl_isomerase-like_sf"/>
</dbReference>
<dbReference type="NCBIfam" id="NF003027">
    <property type="entry name" value="PRK03906.1"/>
    <property type="match status" value="1"/>
</dbReference>
<dbReference type="NCBIfam" id="TIGR00695">
    <property type="entry name" value="uxuA"/>
    <property type="match status" value="1"/>
</dbReference>
<dbReference type="PANTHER" id="PTHR30387">
    <property type="entry name" value="MANNONATE DEHYDRATASE"/>
    <property type="match status" value="1"/>
</dbReference>
<dbReference type="PANTHER" id="PTHR30387:SF2">
    <property type="entry name" value="MANNONATE DEHYDRATASE"/>
    <property type="match status" value="1"/>
</dbReference>
<dbReference type="Pfam" id="PF03786">
    <property type="entry name" value="UxuA"/>
    <property type="match status" value="1"/>
</dbReference>
<dbReference type="PIRSF" id="PIRSF016049">
    <property type="entry name" value="Man_dehyd"/>
    <property type="match status" value="1"/>
</dbReference>
<dbReference type="SUPFAM" id="SSF51658">
    <property type="entry name" value="Xylose isomerase-like"/>
    <property type="match status" value="1"/>
</dbReference>
<keyword id="KW-0408">Iron</keyword>
<keyword id="KW-0456">Lyase</keyword>
<keyword id="KW-0464">Manganese</keyword>
<evidence type="ECO:0000255" key="1">
    <source>
        <dbReference type="HAMAP-Rule" id="MF_00106"/>
    </source>
</evidence>
<organism>
    <name type="scientific">Escherichia coli (strain SMS-3-5 / SECEC)</name>
    <dbReference type="NCBI Taxonomy" id="439855"/>
    <lineage>
        <taxon>Bacteria</taxon>
        <taxon>Pseudomonadati</taxon>
        <taxon>Pseudomonadota</taxon>
        <taxon>Gammaproteobacteria</taxon>
        <taxon>Enterobacterales</taxon>
        <taxon>Enterobacteriaceae</taxon>
        <taxon>Escherichia</taxon>
    </lineage>
</organism>
<proteinExistence type="inferred from homology"/>
<name>UXUA_ECOSM</name>
<feature type="chain" id="PRO_1000197925" description="Mannonate dehydratase">
    <location>
        <begin position="1"/>
        <end position="394"/>
    </location>
</feature>
<comment type="function">
    <text evidence="1">Catalyzes the dehydration of D-mannonate.</text>
</comment>
<comment type="catalytic activity">
    <reaction evidence="1">
        <text>D-mannonate = 2-dehydro-3-deoxy-D-gluconate + H2O</text>
        <dbReference type="Rhea" id="RHEA:20097"/>
        <dbReference type="ChEBI" id="CHEBI:15377"/>
        <dbReference type="ChEBI" id="CHEBI:17767"/>
        <dbReference type="ChEBI" id="CHEBI:57990"/>
        <dbReference type="EC" id="4.2.1.8"/>
    </reaction>
</comment>
<comment type="cofactor">
    <cofactor evidence="1">
        <name>Fe(2+)</name>
        <dbReference type="ChEBI" id="CHEBI:29033"/>
    </cofactor>
    <cofactor evidence="1">
        <name>Mn(2+)</name>
        <dbReference type="ChEBI" id="CHEBI:29035"/>
    </cofactor>
</comment>
<comment type="pathway">
    <text evidence="1">Carbohydrate metabolism; pentose and glucuronate interconversion.</text>
</comment>
<comment type="similarity">
    <text evidence="1">Belongs to the mannonate dehydratase family.</text>
</comment>
<protein>
    <recommendedName>
        <fullName evidence="1">Mannonate dehydratase</fullName>
        <ecNumber evidence="1">4.2.1.8</ecNumber>
    </recommendedName>
    <alternativeName>
        <fullName evidence="1">D-mannonate hydro-lyase</fullName>
    </alternativeName>
</protein>
<gene>
    <name evidence="1" type="primary">uxuA</name>
    <name type="ordered locus">EcSMS35_4849</name>
</gene>
<reference key="1">
    <citation type="journal article" date="2008" name="J. Bacteriol.">
        <title>Insights into the environmental resistance gene pool from the genome sequence of the multidrug-resistant environmental isolate Escherichia coli SMS-3-5.</title>
        <authorList>
            <person name="Fricke W.F."/>
            <person name="Wright M.S."/>
            <person name="Lindell A.H."/>
            <person name="Harkins D.M."/>
            <person name="Baker-Austin C."/>
            <person name="Ravel J."/>
            <person name="Stepanauskas R."/>
        </authorList>
    </citation>
    <scope>NUCLEOTIDE SEQUENCE [LARGE SCALE GENOMIC DNA]</scope>
    <source>
        <strain>SMS-3-5 / SECEC</strain>
    </source>
</reference>